<evidence type="ECO:0000255" key="1">
    <source>
        <dbReference type="HAMAP-Rule" id="MF_01545"/>
    </source>
</evidence>
<keyword id="KW-0997">Cell inner membrane</keyword>
<keyword id="KW-1003">Cell membrane</keyword>
<keyword id="KW-0472">Membrane</keyword>
<keyword id="KW-0812">Transmembrane</keyword>
<keyword id="KW-1133">Transmembrane helix</keyword>
<keyword id="KW-0813">Transport</keyword>
<organism>
    <name type="scientific">Yersinia pseudotuberculosis serotype O:1b (strain IP 31758)</name>
    <dbReference type="NCBI Taxonomy" id="349747"/>
    <lineage>
        <taxon>Bacteria</taxon>
        <taxon>Pseudomonadati</taxon>
        <taxon>Pseudomonadota</taxon>
        <taxon>Gammaproteobacteria</taxon>
        <taxon>Enterobacterales</taxon>
        <taxon>Yersiniaceae</taxon>
        <taxon>Yersinia</taxon>
    </lineage>
</organism>
<reference key="1">
    <citation type="journal article" date="2007" name="PLoS Genet.">
        <title>The complete genome sequence of Yersinia pseudotuberculosis IP31758, the causative agent of Far East scarlet-like fever.</title>
        <authorList>
            <person name="Eppinger M."/>
            <person name="Rosovitz M.J."/>
            <person name="Fricke W.F."/>
            <person name="Rasko D.A."/>
            <person name="Kokorina G."/>
            <person name="Fayolle C."/>
            <person name="Lindler L.E."/>
            <person name="Carniel E."/>
            <person name="Ravel J."/>
        </authorList>
    </citation>
    <scope>NUCLEOTIDE SEQUENCE [LARGE SCALE GENOMIC DNA]</scope>
    <source>
        <strain>IP 31758</strain>
    </source>
</reference>
<dbReference type="EMBL" id="CP000720">
    <property type="protein sequence ID" value="ABS46193.1"/>
    <property type="molecule type" value="Genomic_DNA"/>
</dbReference>
<dbReference type="RefSeq" id="WP_002210095.1">
    <property type="nucleotide sequence ID" value="NC_009708.1"/>
</dbReference>
<dbReference type="SMR" id="A7FDT6"/>
<dbReference type="GeneID" id="57975111"/>
<dbReference type="KEGG" id="ypi:YpsIP31758_0421"/>
<dbReference type="HOGENOM" id="CLU_027647_0_0_6"/>
<dbReference type="Proteomes" id="UP000002412">
    <property type="component" value="Chromosome"/>
</dbReference>
<dbReference type="GO" id="GO:0005886">
    <property type="term" value="C:plasma membrane"/>
    <property type="evidence" value="ECO:0007669"/>
    <property type="project" value="UniProtKB-SubCell"/>
</dbReference>
<dbReference type="GO" id="GO:0022857">
    <property type="term" value="F:transmembrane transporter activity"/>
    <property type="evidence" value="ECO:0007669"/>
    <property type="project" value="UniProtKB-UniRule"/>
</dbReference>
<dbReference type="GO" id="GO:0046942">
    <property type="term" value="P:carboxylic acid transport"/>
    <property type="evidence" value="ECO:0007669"/>
    <property type="project" value="InterPro"/>
</dbReference>
<dbReference type="HAMAP" id="MF_01545">
    <property type="entry name" value="AaeB"/>
    <property type="match status" value="1"/>
</dbReference>
<dbReference type="InterPro" id="IPR006726">
    <property type="entry name" value="PHBA_efflux_AaeB/fusaric-R"/>
</dbReference>
<dbReference type="InterPro" id="IPR023706">
    <property type="entry name" value="PHBA_efflux_pump_AaeB"/>
</dbReference>
<dbReference type="NCBIfam" id="NF007916">
    <property type="entry name" value="PRK10631.1"/>
    <property type="match status" value="1"/>
</dbReference>
<dbReference type="PANTHER" id="PTHR30509:SF9">
    <property type="entry name" value="MULTIDRUG RESISTANCE PROTEIN MDTO"/>
    <property type="match status" value="1"/>
</dbReference>
<dbReference type="PANTHER" id="PTHR30509">
    <property type="entry name" value="P-HYDROXYBENZOIC ACID EFFLUX PUMP SUBUNIT-RELATED"/>
    <property type="match status" value="1"/>
</dbReference>
<dbReference type="Pfam" id="PF04632">
    <property type="entry name" value="FUSC"/>
    <property type="match status" value="1"/>
</dbReference>
<feature type="chain" id="PRO_1000068808" description="p-hydroxybenzoic acid efflux pump subunit AaeB">
    <location>
        <begin position="1"/>
        <end position="651"/>
    </location>
</feature>
<feature type="transmembrane region" description="Helical" evidence="1">
    <location>
        <begin position="11"/>
        <end position="31"/>
    </location>
</feature>
<feature type="transmembrane region" description="Helical" evidence="1">
    <location>
        <begin position="41"/>
        <end position="61"/>
    </location>
</feature>
<feature type="transmembrane region" description="Helical" evidence="1">
    <location>
        <begin position="67"/>
        <end position="87"/>
    </location>
</feature>
<feature type="transmembrane region" description="Helical" evidence="1">
    <location>
        <begin position="91"/>
        <end position="111"/>
    </location>
</feature>
<feature type="transmembrane region" description="Helical" evidence="1">
    <location>
        <begin position="119"/>
        <end position="139"/>
    </location>
</feature>
<feature type="transmembrane region" description="Helical" evidence="1">
    <location>
        <begin position="150"/>
        <end position="170"/>
    </location>
</feature>
<feature type="transmembrane region" description="Helical" evidence="1">
    <location>
        <begin position="368"/>
        <end position="388"/>
    </location>
</feature>
<feature type="transmembrane region" description="Helical" evidence="1">
    <location>
        <begin position="405"/>
        <end position="425"/>
    </location>
</feature>
<feature type="transmembrane region" description="Helical" evidence="1">
    <location>
        <begin position="429"/>
        <end position="449"/>
    </location>
</feature>
<feature type="transmembrane region" description="Helical" evidence="1">
    <location>
        <begin position="455"/>
        <end position="475"/>
    </location>
</feature>
<feature type="transmembrane region" description="Helical" evidence="1">
    <location>
        <begin position="481"/>
        <end position="501"/>
    </location>
</feature>
<sequence>MTHPSFIRLRFAFKLSFAIVAALFLGFHLQLETPRWSVLTAAIVSAGPAFAAGGEPFSGAIRHRGWLRIIGTFIGCIGGLVIIVLTIRAPVLTLMLCCLWAGICTWISSLVRVENSYAFGLAGYTALIIIVTTGETPLLTPQFAVERCSEIVLGIVCAVMADLLFSPRSIKQDIDRLVDKVLVDQYRLLQLCIQPAEKSEIDRAWNELVKNTTSLNGMRSYLMMESSRWQRCNRRLQVLHTESLALITQACETYLVMSNHPEVISAELKTMLSEPAQTPAEIHQQMKKLRQFIAASHSEAIPHTISSWVGAATRYLLLSKGIQTNSSINQVEEDILAGDAPVKPISAEGHHAMINGLRTGIATAIGGLFWLWTGWTSGAGCMVMIAVVTSLAMRTPNPRRMALDFLVGVIIALPIGALYFMFIIPSTQQSMLLLCISLGVLAFIIGIEVQKRRLGSLGTLASTINIIVLSNPMIFNVRQFLDSALGQIVGCFVSLIVLLLIRDNAKDRTGRTLLNRFVYSAVSALTTNKTKRGENHLPALYQQLNQLLMMFPADIDKYRLALTLIIAHQRLNRTEIPVNAELSAFHKQIRSTAERVITVNNDQKRRYYFARLLQELDQYQQKLVDYQAADAVIRPVKRLTEMLRKYQSALI</sequence>
<gene>
    <name evidence="1" type="primary">aaeB</name>
    <name type="ordered locus">YpsIP31758_0421</name>
</gene>
<comment type="function">
    <text evidence="1">Forms an efflux pump with AaeA. Could function as a metabolic relief valve, allowing to eliminate certain compounds when they accumulate to high levels in the cell.</text>
</comment>
<comment type="subcellular location">
    <subcellularLocation>
        <location evidence="1">Cell inner membrane</location>
        <topology evidence="1">Multi-pass membrane protein</topology>
    </subcellularLocation>
</comment>
<comment type="similarity">
    <text evidence="1">Belongs to the aromatic acid exporter ArAE (TC 2.A.85) family.</text>
</comment>
<proteinExistence type="inferred from homology"/>
<protein>
    <recommendedName>
        <fullName evidence="1">p-hydroxybenzoic acid efflux pump subunit AaeB</fullName>
        <shortName evidence="1">pHBA efflux pump protein B</shortName>
    </recommendedName>
</protein>
<name>AAEB_YERP3</name>
<accession>A7FDT6</accession>